<evidence type="ECO:0000256" key="1">
    <source>
        <dbReference type="SAM" id="MobiDB-lite"/>
    </source>
</evidence>
<accession>Q96NJ1</accession>
<feature type="chain" id="PRO_0000304682" description="Uncharacterized protein FLJ30774">
    <location>
        <begin position="1"/>
        <end position="140"/>
    </location>
</feature>
<feature type="region of interest" description="Disordered" evidence="1">
    <location>
        <begin position="62"/>
        <end position="140"/>
    </location>
</feature>
<feature type="compositionally biased region" description="Low complexity" evidence="1">
    <location>
        <begin position="71"/>
        <end position="94"/>
    </location>
</feature>
<proteinExistence type="evidence at transcript level"/>
<name>YI001_HUMAN</name>
<keyword id="KW-1185">Reference proteome</keyword>
<comment type="miscellaneous">
    <text>This protein is produced by a bicistronic transcript which also produces the C9orf163 protein from an non-overlapping reading frame.</text>
</comment>
<reference key="1">
    <citation type="journal article" date="2004" name="Nat. Genet.">
        <title>Complete sequencing and characterization of 21,243 full-length human cDNAs.</title>
        <authorList>
            <person name="Ota T."/>
            <person name="Suzuki Y."/>
            <person name="Nishikawa T."/>
            <person name="Otsuki T."/>
            <person name="Sugiyama T."/>
            <person name="Irie R."/>
            <person name="Wakamatsu A."/>
            <person name="Hayashi K."/>
            <person name="Sato H."/>
            <person name="Nagai K."/>
            <person name="Kimura K."/>
            <person name="Makita H."/>
            <person name="Sekine M."/>
            <person name="Obayashi M."/>
            <person name="Nishi T."/>
            <person name="Shibahara T."/>
            <person name="Tanaka T."/>
            <person name="Ishii S."/>
            <person name="Yamamoto J."/>
            <person name="Saito K."/>
            <person name="Kawai Y."/>
            <person name="Isono Y."/>
            <person name="Nakamura Y."/>
            <person name="Nagahari K."/>
            <person name="Murakami K."/>
            <person name="Yasuda T."/>
            <person name="Iwayanagi T."/>
            <person name="Wagatsuma M."/>
            <person name="Shiratori A."/>
            <person name="Sudo H."/>
            <person name="Hosoiri T."/>
            <person name="Kaku Y."/>
            <person name="Kodaira H."/>
            <person name="Kondo H."/>
            <person name="Sugawara M."/>
            <person name="Takahashi M."/>
            <person name="Kanda K."/>
            <person name="Yokoi T."/>
            <person name="Furuya T."/>
            <person name="Kikkawa E."/>
            <person name="Omura Y."/>
            <person name="Abe K."/>
            <person name="Kamihara K."/>
            <person name="Katsuta N."/>
            <person name="Sato K."/>
            <person name="Tanikawa M."/>
            <person name="Yamazaki M."/>
            <person name="Ninomiya K."/>
            <person name="Ishibashi T."/>
            <person name="Yamashita H."/>
            <person name="Murakawa K."/>
            <person name="Fujimori K."/>
            <person name="Tanai H."/>
            <person name="Kimata M."/>
            <person name="Watanabe M."/>
            <person name="Hiraoka S."/>
            <person name="Chiba Y."/>
            <person name="Ishida S."/>
            <person name="Ono Y."/>
            <person name="Takiguchi S."/>
            <person name="Watanabe S."/>
            <person name="Yosida M."/>
            <person name="Hotuta T."/>
            <person name="Kusano J."/>
            <person name="Kanehori K."/>
            <person name="Takahashi-Fujii A."/>
            <person name="Hara H."/>
            <person name="Tanase T.-O."/>
            <person name="Nomura Y."/>
            <person name="Togiya S."/>
            <person name="Komai F."/>
            <person name="Hara R."/>
            <person name="Takeuchi K."/>
            <person name="Arita M."/>
            <person name="Imose N."/>
            <person name="Musashino K."/>
            <person name="Yuuki H."/>
            <person name="Oshima A."/>
            <person name="Sasaki N."/>
            <person name="Aotsuka S."/>
            <person name="Yoshikawa Y."/>
            <person name="Matsunawa H."/>
            <person name="Ichihara T."/>
            <person name="Shiohata N."/>
            <person name="Sano S."/>
            <person name="Moriya S."/>
            <person name="Momiyama H."/>
            <person name="Satoh N."/>
            <person name="Takami S."/>
            <person name="Terashima Y."/>
            <person name="Suzuki O."/>
            <person name="Nakagawa S."/>
            <person name="Senoh A."/>
            <person name="Mizoguchi H."/>
            <person name="Goto Y."/>
            <person name="Shimizu F."/>
            <person name="Wakebe H."/>
            <person name="Hishigaki H."/>
            <person name="Watanabe T."/>
            <person name="Sugiyama A."/>
            <person name="Takemoto M."/>
            <person name="Kawakami B."/>
            <person name="Yamazaki M."/>
            <person name="Watanabe K."/>
            <person name="Kumagai A."/>
            <person name="Itakura S."/>
            <person name="Fukuzumi Y."/>
            <person name="Fujimori Y."/>
            <person name="Komiyama M."/>
            <person name="Tashiro H."/>
            <person name="Tanigami A."/>
            <person name="Fujiwara T."/>
            <person name="Ono T."/>
            <person name="Yamada K."/>
            <person name="Fujii Y."/>
            <person name="Ozaki K."/>
            <person name="Hirao M."/>
            <person name="Ohmori Y."/>
            <person name="Kawabata A."/>
            <person name="Hikiji T."/>
            <person name="Kobatake N."/>
            <person name="Inagaki H."/>
            <person name="Ikema Y."/>
            <person name="Okamoto S."/>
            <person name="Okitani R."/>
            <person name="Kawakami T."/>
            <person name="Noguchi S."/>
            <person name="Itoh T."/>
            <person name="Shigeta K."/>
            <person name="Senba T."/>
            <person name="Matsumura K."/>
            <person name="Nakajima Y."/>
            <person name="Mizuno T."/>
            <person name="Morinaga M."/>
            <person name="Sasaki M."/>
            <person name="Togashi T."/>
            <person name="Oyama M."/>
            <person name="Hata H."/>
            <person name="Watanabe M."/>
            <person name="Komatsu T."/>
            <person name="Mizushima-Sugano J."/>
            <person name="Satoh T."/>
            <person name="Shirai Y."/>
            <person name="Takahashi Y."/>
            <person name="Nakagawa K."/>
            <person name="Okumura K."/>
            <person name="Nagase T."/>
            <person name="Nomura N."/>
            <person name="Kikuchi H."/>
            <person name="Masuho Y."/>
            <person name="Yamashita R."/>
            <person name="Nakai K."/>
            <person name="Yada T."/>
            <person name="Nakamura Y."/>
            <person name="Ohara O."/>
            <person name="Isogai T."/>
            <person name="Sugano S."/>
        </authorList>
    </citation>
    <scope>NUCLEOTIDE SEQUENCE [LARGE SCALE MRNA]</scope>
    <source>
        <tissue>Brain</tissue>
    </source>
</reference>
<reference key="2">
    <citation type="journal article" date="2004" name="Nature">
        <title>DNA sequence and analysis of human chromosome 9.</title>
        <authorList>
            <person name="Humphray S.J."/>
            <person name="Oliver K."/>
            <person name="Hunt A.R."/>
            <person name="Plumb R.W."/>
            <person name="Loveland J.E."/>
            <person name="Howe K.L."/>
            <person name="Andrews T.D."/>
            <person name="Searle S."/>
            <person name="Hunt S.E."/>
            <person name="Scott C.E."/>
            <person name="Jones M.C."/>
            <person name="Ainscough R."/>
            <person name="Almeida J.P."/>
            <person name="Ambrose K.D."/>
            <person name="Ashwell R.I.S."/>
            <person name="Babbage A.K."/>
            <person name="Babbage S."/>
            <person name="Bagguley C.L."/>
            <person name="Bailey J."/>
            <person name="Banerjee R."/>
            <person name="Barker D.J."/>
            <person name="Barlow K.F."/>
            <person name="Bates K."/>
            <person name="Beasley H."/>
            <person name="Beasley O."/>
            <person name="Bird C.P."/>
            <person name="Bray-Allen S."/>
            <person name="Brown A.J."/>
            <person name="Brown J.Y."/>
            <person name="Burford D."/>
            <person name="Burrill W."/>
            <person name="Burton J."/>
            <person name="Carder C."/>
            <person name="Carter N.P."/>
            <person name="Chapman J.C."/>
            <person name="Chen Y."/>
            <person name="Clarke G."/>
            <person name="Clark S.Y."/>
            <person name="Clee C.M."/>
            <person name="Clegg S."/>
            <person name="Collier R.E."/>
            <person name="Corby N."/>
            <person name="Crosier M."/>
            <person name="Cummings A.T."/>
            <person name="Davies J."/>
            <person name="Dhami P."/>
            <person name="Dunn M."/>
            <person name="Dutta I."/>
            <person name="Dyer L.W."/>
            <person name="Earthrowl M.E."/>
            <person name="Faulkner L."/>
            <person name="Fleming C.J."/>
            <person name="Frankish A."/>
            <person name="Frankland J.A."/>
            <person name="French L."/>
            <person name="Fricker D.G."/>
            <person name="Garner P."/>
            <person name="Garnett J."/>
            <person name="Ghori J."/>
            <person name="Gilbert J.G.R."/>
            <person name="Glison C."/>
            <person name="Grafham D.V."/>
            <person name="Gribble S."/>
            <person name="Griffiths C."/>
            <person name="Griffiths-Jones S."/>
            <person name="Grocock R."/>
            <person name="Guy J."/>
            <person name="Hall R.E."/>
            <person name="Hammond S."/>
            <person name="Harley J.L."/>
            <person name="Harrison E.S.I."/>
            <person name="Hart E.A."/>
            <person name="Heath P.D."/>
            <person name="Henderson C.D."/>
            <person name="Hopkins B.L."/>
            <person name="Howard P.J."/>
            <person name="Howden P.J."/>
            <person name="Huckle E."/>
            <person name="Johnson C."/>
            <person name="Johnson D."/>
            <person name="Joy A.A."/>
            <person name="Kay M."/>
            <person name="Keenan S."/>
            <person name="Kershaw J.K."/>
            <person name="Kimberley A.M."/>
            <person name="King A."/>
            <person name="Knights A."/>
            <person name="Laird G.K."/>
            <person name="Langford C."/>
            <person name="Lawlor S."/>
            <person name="Leongamornlert D.A."/>
            <person name="Leversha M."/>
            <person name="Lloyd C."/>
            <person name="Lloyd D.M."/>
            <person name="Lovell J."/>
            <person name="Martin S."/>
            <person name="Mashreghi-Mohammadi M."/>
            <person name="Matthews L."/>
            <person name="McLaren S."/>
            <person name="McLay K.E."/>
            <person name="McMurray A."/>
            <person name="Milne S."/>
            <person name="Nickerson T."/>
            <person name="Nisbett J."/>
            <person name="Nordsiek G."/>
            <person name="Pearce A.V."/>
            <person name="Peck A.I."/>
            <person name="Porter K.M."/>
            <person name="Pandian R."/>
            <person name="Pelan S."/>
            <person name="Phillimore B."/>
            <person name="Povey S."/>
            <person name="Ramsey Y."/>
            <person name="Rand V."/>
            <person name="Scharfe M."/>
            <person name="Sehra H.K."/>
            <person name="Shownkeen R."/>
            <person name="Sims S.K."/>
            <person name="Skuce C.D."/>
            <person name="Smith M."/>
            <person name="Steward C.A."/>
            <person name="Swarbreck D."/>
            <person name="Sycamore N."/>
            <person name="Tester J."/>
            <person name="Thorpe A."/>
            <person name="Tracey A."/>
            <person name="Tromans A."/>
            <person name="Thomas D.W."/>
            <person name="Wall M."/>
            <person name="Wallis J.M."/>
            <person name="West A.P."/>
            <person name="Whitehead S.L."/>
            <person name="Willey D.L."/>
            <person name="Williams S.A."/>
            <person name="Wilming L."/>
            <person name="Wray P.W."/>
            <person name="Young L."/>
            <person name="Ashurst J.L."/>
            <person name="Coulson A."/>
            <person name="Blocker H."/>
            <person name="Durbin R.M."/>
            <person name="Sulston J.E."/>
            <person name="Hubbard T."/>
            <person name="Jackson M.J."/>
            <person name="Bentley D.R."/>
            <person name="Beck S."/>
            <person name="Rogers J."/>
            <person name="Dunham I."/>
        </authorList>
    </citation>
    <scope>NUCLEOTIDE SEQUENCE [LARGE SCALE GENOMIC DNA]</scope>
</reference>
<reference key="3">
    <citation type="journal article" date="2004" name="Genome Res.">
        <title>The status, quality, and expansion of the NIH full-length cDNA project: the Mammalian Gene Collection (MGC).</title>
        <authorList>
            <consortium name="The MGC Project Team"/>
        </authorList>
    </citation>
    <scope>NUCLEOTIDE SEQUENCE [LARGE SCALE MRNA]</scope>
    <source>
        <tissue>Testis</tissue>
    </source>
</reference>
<protein>
    <recommendedName>
        <fullName>Uncharacterized protein FLJ30774</fullName>
    </recommendedName>
</protein>
<dbReference type="EMBL" id="AK055336">
    <property type="protein sequence ID" value="BAB70904.1"/>
    <property type="molecule type" value="mRNA"/>
</dbReference>
<dbReference type="EMBL" id="AL592301">
    <property type="status" value="NOT_ANNOTATED_CDS"/>
    <property type="molecule type" value="Genomic_DNA"/>
</dbReference>
<dbReference type="EMBL" id="BC036221">
    <property type="status" value="NOT_ANNOTATED_CDS"/>
    <property type="molecule type" value="mRNA"/>
</dbReference>
<dbReference type="RefSeq" id="NP_689784.1">
    <property type="nucleotide sequence ID" value="NM_152571.2"/>
</dbReference>
<dbReference type="BioGRID" id="127642">
    <property type="interactions" value="70"/>
</dbReference>
<dbReference type="iPTMnet" id="Q96NJ1"/>
<dbReference type="PhosphoSitePlus" id="Q96NJ1"/>
<dbReference type="BioMuta" id="-"/>
<dbReference type="MassIVE" id="Q96NJ1"/>
<dbReference type="TopDownProteomics" id="Q96NJ1"/>
<dbReference type="DNASU" id="158055"/>
<dbReference type="neXtProt" id="NX_Q96NJ1"/>
<dbReference type="PharmGKB" id="PA144596496"/>
<dbReference type="InParanoid" id="Q96NJ1"/>
<dbReference type="PAN-GO" id="Q96NJ1">
    <property type="GO annotations" value="0 GO annotations based on evolutionary models"/>
</dbReference>
<dbReference type="PathwayCommons" id="Q96NJ1"/>
<dbReference type="BioGRID-ORCS" id="158055">
    <property type="hits" value="21 hits in 755 CRISPR screens"/>
</dbReference>
<dbReference type="GenomeRNAi" id="158055"/>
<dbReference type="Pharos" id="Q96NJ1">
    <property type="development level" value="Tdark"/>
</dbReference>
<dbReference type="Proteomes" id="UP000005640">
    <property type="component" value="Unplaced"/>
</dbReference>
<dbReference type="RNAct" id="Q96NJ1">
    <property type="molecule type" value="protein"/>
</dbReference>
<organism>
    <name type="scientific">Homo sapiens</name>
    <name type="common">Human</name>
    <dbReference type="NCBI Taxonomy" id="9606"/>
    <lineage>
        <taxon>Eukaryota</taxon>
        <taxon>Metazoa</taxon>
        <taxon>Chordata</taxon>
        <taxon>Craniata</taxon>
        <taxon>Vertebrata</taxon>
        <taxon>Euteleostomi</taxon>
        <taxon>Mammalia</taxon>
        <taxon>Eutheria</taxon>
        <taxon>Euarchontoglires</taxon>
        <taxon>Primates</taxon>
        <taxon>Haplorrhini</taxon>
        <taxon>Catarrhini</taxon>
        <taxon>Hominidae</taxon>
        <taxon>Homo</taxon>
    </lineage>
</organism>
<sequence>MRRERPELRDAEGRLRLRAGCLVTAWPRAPSGAGSWSMAAASPWPASWGFPDASSTVPSLCTEARAGRGGPATARSRVSADSQGGRAGSSSPSSALRLCCAGPSQAHPGPSPAVLPGRCGLLGSFPRPPAPQGRWGPSLG</sequence>